<evidence type="ECO:0000255" key="1">
    <source>
        <dbReference type="HAMAP-Rule" id="MF_00022"/>
    </source>
</evidence>
<comment type="function">
    <text evidence="1">Catalyzes the attachment of glutamate to tRNA(Glu) in a two-step reaction: glutamate is first activated by ATP to form Glu-AMP and then transferred to the acceptor end of tRNA(Glu).</text>
</comment>
<comment type="catalytic activity">
    <reaction evidence="1">
        <text>tRNA(Glu) + L-glutamate + ATP = L-glutamyl-tRNA(Glu) + AMP + diphosphate</text>
        <dbReference type="Rhea" id="RHEA:23540"/>
        <dbReference type="Rhea" id="RHEA-COMP:9663"/>
        <dbReference type="Rhea" id="RHEA-COMP:9680"/>
        <dbReference type="ChEBI" id="CHEBI:29985"/>
        <dbReference type="ChEBI" id="CHEBI:30616"/>
        <dbReference type="ChEBI" id="CHEBI:33019"/>
        <dbReference type="ChEBI" id="CHEBI:78442"/>
        <dbReference type="ChEBI" id="CHEBI:78520"/>
        <dbReference type="ChEBI" id="CHEBI:456215"/>
        <dbReference type="EC" id="6.1.1.17"/>
    </reaction>
</comment>
<comment type="subunit">
    <text evidence="1">Monomer.</text>
</comment>
<comment type="subcellular location">
    <subcellularLocation>
        <location evidence="1">Cytoplasm</location>
    </subcellularLocation>
</comment>
<comment type="similarity">
    <text evidence="1">Belongs to the class-I aminoacyl-tRNA synthetase family. Glutamate--tRNA ligase type 1 subfamily.</text>
</comment>
<accession>Q02W76</accession>
<sequence>MNKKIRVRYAPSPTGLLHIGNARTALFNYLFARHHGGDFIIRIEDTDRERHVEDGERSQLENLRWLGMDWDESPETHENYRQSERLPLYQKYIDQLLAEGKAYYSYKTPEELEADHAKQEAAGIPPHYINEYAGMSDDEKAAYIAERKAQNIEPVVRISVDEKAIYKWNDIVKGEIEFEGGNIGGDWVIQKRDGYPTYNFAVVVDDHDMQISHVIRGDDHIANTPKQLVVYDALGWEAPQFGHMTLIINSETGKKLSKRDTNTLQFIEDYRKKGYMSDAIFNFIALLGWNPGGEKEIFSREELIELFDENRLSKSPAAFDQKKLDWMDNEYIKNADFAKVFELTKPFLLAANRFDERAQELVKLYQPQMKSADEVVELTDLFYGDFPELTDEAREMLAAETTPLALSTFRAKLAELPESDFTVENIFPLFKATQKETGVKGKMLWMPIRIAASGSMHGPELPETIALLGKEKVLAHLDAALNK</sequence>
<feature type="chain" id="PRO_1000001914" description="Glutamate--tRNA ligase">
    <location>
        <begin position="1"/>
        <end position="483"/>
    </location>
</feature>
<feature type="short sequence motif" description="'HIGH' region" evidence="1">
    <location>
        <begin position="11"/>
        <end position="21"/>
    </location>
</feature>
<feature type="short sequence motif" description="'KMSKS' region" evidence="1">
    <location>
        <begin position="255"/>
        <end position="259"/>
    </location>
</feature>
<feature type="binding site" evidence="1">
    <location>
        <position position="258"/>
    </location>
    <ligand>
        <name>ATP</name>
        <dbReference type="ChEBI" id="CHEBI:30616"/>
    </ligand>
</feature>
<protein>
    <recommendedName>
        <fullName evidence="1">Glutamate--tRNA ligase</fullName>
        <ecNumber evidence="1">6.1.1.17</ecNumber>
    </recommendedName>
    <alternativeName>
        <fullName evidence="1">Glutamyl-tRNA synthetase</fullName>
        <shortName evidence="1">GluRS</shortName>
    </alternativeName>
</protein>
<gene>
    <name evidence="1" type="primary">gltX</name>
    <name type="ordered locus">LACR_2346</name>
</gene>
<dbReference type="EC" id="6.1.1.17" evidence="1"/>
<dbReference type="EMBL" id="CP000425">
    <property type="protein sequence ID" value="ABJ73796.1"/>
    <property type="molecule type" value="Genomic_DNA"/>
</dbReference>
<dbReference type="RefSeq" id="WP_011677125.1">
    <property type="nucleotide sequence ID" value="NC_008527.1"/>
</dbReference>
<dbReference type="SMR" id="Q02W76"/>
<dbReference type="KEGG" id="llc:LACR_2346"/>
<dbReference type="HOGENOM" id="CLU_015768_6_1_9"/>
<dbReference type="Proteomes" id="UP000000240">
    <property type="component" value="Chromosome"/>
</dbReference>
<dbReference type="GO" id="GO:0005829">
    <property type="term" value="C:cytosol"/>
    <property type="evidence" value="ECO:0007669"/>
    <property type="project" value="TreeGrafter"/>
</dbReference>
<dbReference type="GO" id="GO:0005524">
    <property type="term" value="F:ATP binding"/>
    <property type="evidence" value="ECO:0007669"/>
    <property type="project" value="UniProtKB-UniRule"/>
</dbReference>
<dbReference type="GO" id="GO:0004818">
    <property type="term" value="F:glutamate-tRNA ligase activity"/>
    <property type="evidence" value="ECO:0007669"/>
    <property type="project" value="UniProtKB-UniRule"/>
</dbReference>
<dbReference type="GO" id="GO:0000049">
    <property type="term" value="F:tRNA binding"/>
    <property type="evidence" value="ECO:0007669"/>
    <property type="project" value="InterPro"/>
</dbReference>
<dbReference type="GO" id="GO:0008270">
    <property type="term" value="F:zinc ion binding"/>
    <property type="evidence" value="ECO:0007669"/>
    <property type="project" value="InterPro"/>
</dbReference>
<dbReference type="GO" id="GO:0006424">
    <property type="term" value="P:glutamyl-tRNA aminoacylation"/>
    <property type="evidence" value="ECO:0007669"/>
    <property type="project" value="UniProtKB-UniRule"/>
</dbReference>
<dbReference type="CDD" id="cd00808">
    <property type="entry name" value="GluRS_core"/>
    <property type="match status" value="1"/>
</dbReference>
<dbReference type="FunFam" id="1.10.10.350:FF:000002">
    <property type="entry name" value="Glutamate--tRNA ligase"/>
    <property type="match status" value="1"/>
</dbReference>
<dbReference type="FunFam" id="3.40.50.620:FF:000007">
    <property type="entry name" value="Glutamate--tRNA ligase"/>
    <property type="match status" value="1"/>
</dbReference>
<dbReference type="Gene3D" id="1.10.10.350">
    <property type="match status" value="1"/>
</dbReference>
<dbReference type="Gene3D" id="3.40.50.620">
    <property type="entry name" value="HUPs"/>
    <property type="match status" value="1"/>
</dbReference>
<dbReference type="HAMAP" id="MF_00022">
    <property type="entry name" value="Glu_tRNA_synth_type1"/>
    <property type="match status" value="1"/>
</dbReference>
<dbReference type="InterPro" id="IPR045462">
    <property type="entry name" value="aa-tRNA-synth_I_cd-bd"/>
</dbReference>
<dbReference type="InterPro" id="IPR020751">
    <property type="entry name" value="aa-tRNA-synth_I_codon-bd_sub2"/>
</dbReference>
<dbReference type="InterPro" id="IPR001412">
    <property type="entry name" value="aa-tRNA-synth_I_CS"/>
</dbReference>
<dbReference type="InterPro" id="IPR008925">
    <property type="entry name" value="aa_tRNA-synth_I_cd-bd_sf"/>
</dbReference>
<dbReference type="InterPro" id="IPR004527">
    <property type="entry name" value="Glu-tRNA-ligase_bac/mito"/>
</dbReference>
<dbReference type="InterPro" id="IPR000924">
    <property type="entry name" value="Glu/Gln-tRNA-synth"/>
</dbReference>
<dbReference type="InterPro" id="IPR020058">
    <property type="entry name" value="Glu/Gln-tRNA-synth_Ib_cat-dom"/>
</dbReference>
<dbReference type="InterPro" id="IPR049940">
    <property type="entry name" value="GluQ/Sye"/>
</dbReference>
<dbReference type="InterPro" id="IPR033910">
    <property type="entry name" value="GluRS_core"/>
</dbReference>
<dbReference type="InterPro" id="IPR014729">
    <property type="entry name" value="Rossmann-like_a/b/a_fold"/>
</dbReference>
<dbReference type="NCBIfam" id="TIGR00464">
    <property type="entry name" value="gltX_bact"/>
    <property type="match status" value="1"/>
</dbReference>
<dbReference type="PANTHER" id="PTHR43311">
    <property type="entry name" value="GLUTAMATE--TRNA LIGASE"/>
    <property type="match status" value="1"/>
</dbReference>
<dbReference type="PANTHER" id="PTHR43311:SF2">
    <property type="entry name" value="GLUTAMATE--TRNA LIGASE, MITOCHONDRIAL-RELATED"/>
    <property type="match status" value="1"/>
</dbReference>
<dbReference type="Pfam" id="PF19269">
    <property type="entry name" value="Anticodon_2"/>
    <property type="match status" value="1"/>
</dbReference>
<dbReference type="Pfam" id="PF00749">
    <property type="entry name" value="tRNA-synt_1c"/>
    <property type="match status" value="1"/>
</dbReference>
<dbReference type="PRINTS" id="PR00987">
    <property type="entry name" value="TRNASYNTHGLU"/>
</dbReference>
<dbReference type="SUPFAM" id="SSF48163">
    <property type="entry name" value="An anticodon-binding domain of class I aminoacyl-tRNA synthetases"/>
    <property type="match status" value="1"/>
</dbReference>
<dbReference type="SUPFAM" id="SSF52374">
    <property type="entry name" value="Nucleotidylyl transferase"/>
    <property type="match status" value="1"/>
</dbReference>
<dbReference type="PROSITE" id="PS00178">
    <property type="entry name" value="AA_TRNA_LIGASE_I"/>
    <property type="match status" value="1"/>
</dbReference>
<name>SYE_LACLS</name>
<reference key="1">
    <citation type="journal article" date="2006" name="Proc. Natl. Acad. Sci. U.S.A.">
        <title>Comparative genomics of the lactic acid bacteria.</title>
        <authorList>
            <person name="Makarova K.S."/>
            <person name="Slesarev A."/>
            <person name="Wolf Y.I."/>
            <person name="Sorokin A."/>
            <person name="Mirkin B."/>
            <person name="Koonin E.V."/>
            <person name="Pavlov A."/>
            <person name="Pavlova N."/>
            <person name="Karamychev V."/>
            <person name="Polouchine N."/>
            <person name="Shakhova V."/>
            <person name="Grigoriev I."/>
            <person name="Lou Y."/>
            <person name="Rohksar D."/>
            <person name="Lucas S."/>
            <person name="Huang K."/>
            <person name="Goodstein D.M."/>
            <person name="Hawkins T."/>
            <person name="Plengvidhya V."/>
            <person name="Welker D."/>
            <person name="Hughes J."/>
            <person name="Goh Y."/>
            <person name="Benson A."/>
            <person name="Baldwin K."/>
            <person name="Lee J.-H."/>
            <person name="Diaz-Muniz I."/>
            <person name="Dosti B."/>
            <person name="Smeianov V."/>
            <person name="Wechter W."/>
            <person name="Barabote R."/>
            <person name="Lorca G."/>
            <person name="Altermann E."/>
            <person name="Barrangou R."/>
            <person name="Ganesan B."/>
            <person name="Xie Y."/>
            <person name="Rawsthorne H."/>
            <person name="Tamir D."/>
            <person name="Parker C."/>
            <person name="Breidt F."/>
            <person name="Broadbent J.R."/>
            <person name="Hutkins R."/>
            <person name="O'Sullivan D."/>
            <person name="Steele J."/>
            <person name="Unlu G."/>
            <person name="Saier M.H. Jr."/>
            <person name="Klaenhammer T."/>
            <person name="Richardson P."/>
            <person name="Kozyavkin S."/>
            <person name="Weimer B.C."/>
            <person name="Mills D.A."/>
        </authorList>
    </citation>
    <scope>NUCLEOTIDE SEQUENCE [LARGE SCALE GENOMIC DNA]</scope>
    <source>
        <strain>SK11</strain>
    </source>
</reference>
<proteinExistence type="inferred from homology"/>
<keyword id="KW-0030">Aminoacyl-tRNA synthetase</keyword>
<keyword id="KW-0067">ATP-binding</keyword>
<keyword id="KW-0963">Cytoplasm</keyword>
<keyword id="KW-0436">Ligase</keyword>
<keyword id="KW-0547">Nucleotide-binding</keyword>
<keyword id="KW-0648">Protein biosynthesis</keyword>
<organism>
    <name type="scientific">Lactococcus lactis subsp. cremoris (strain SK11)</name>
    <dbReference type="NCBI Taxonomy" id="272622"/>
    <lineage>
        <taxon>Bacteria</taxon>
        <taxon>Bacillati</taxon>
        <taxon>Bacillota</taxon>
        <taxon>Bacilli</taxon>
        <taxon>Lactobacillales</taxon>
        <taxon>Streptococcaceae</taxon>
        <taxon>Lactococcus</taxon>
        <taxon>Lactococcus cremoris subsp. cremoris</taxon>
    </lineage>
</organism>